<sequence>MADKKGSNSEKLLYCSFCGKSQHEVKKLIAGPSVFICDECIDLCNEIIRDEAAAAGVEASLSKSDLPSPQEIRDILDQYVIGQERAKKILAVAVYNHYKRLKHLDKKDDVELSKSNILLIGPTGSGKTLLAQTLARLLNVPFVIADATTLTEAGYVGEDVENIIQKLLQNCNYEVEKAQRGIVYIDEIDKISRKSDNPSITRDVSGEGVQQALLKLVEGTMASVPPQGGRKHPNQDFIQVDTTNILFICGGAFDGLEKVITDRTEKTGIGFGATVKSKQERDAGEVLREVEPEDLIKFGLIPELIGRLPVVATLGKLDEAALMKILVEPKNALVKQYQKLFAMERVELEIRPDALQAVARKAIRRKTGARGLRSIIEQALLDVMYELPTLKGVSKVIIDDNVIEGDGKPLLIYEDTPKVAGSN</sequence>
<protein>
    <recommendedName>
        <fullName evidence="1">ATP-dependent Clp protease ATP-binding subunit ClpX</fullName>
    </recommendedName>
</protein>
<gene>
    <name evidence="1" type="primary">clpX</name>
    <name type="ordered locus">BURPS668_2322</name>
</gene>
<comment type="function">
    <text evidence="1">ATP-dependent specificity component of the Clp protease. It directs the protease to specific substrates. Can perform chaperone functions in the absence of ClpP.</text>
</comment>
<comment type="subunit">
    <text evidence="1">Component of the ClpX-ClpP complex. Forms a hexameric ring that, in the presence of ATP, binds to fourteen ClpP subunits assembled into a disk-like structure with a central cavity, resembling the structure of eukaryotic proteasomes.</text>
</comment>
<comment type="similarity">
    <text evidence="1">Belongs to the ClpX chaperone family.</text>
</comment>
<organism>
    <name type="scientific">Burkholderia pseudomallei (strain 668)</name>
    <dbReference type="NCBI Taxonomy" id="320373"/>
    <lineage>
        <taxon>Bacteria</taxon>
        <taxon>Pseudomonadati</taxon>
        <taxon>Pseudomonadota</taxon>
        <taxon>Betaproteobacteria</taxon>
        <taxon>Burkholderiales</taxon>
        <taxon>Burkholderiaceae</taxon>
        <taxon>Burkholderia</taxon>
        <taxon>pseudomallei group</taxon>
    </lineage>
</organism>
<name>CLPX_BURP6</name>
<dbReference type="EMBL" id="CP000570">
    <property type="protein sequence ID" value="ABN84049.1"/>
    <property type="molecule type" value="Genomic_DNA"/>
</dbReference>
<dbReference type="RefSeq" id="WP_004521258.1">
    <property type="nucleotide sequence ID" value="NC_009074.1"/>
</dbReference>
<dbReference type="SMR" id="A3NAI4"/>
<dbReference type="GeneID" id="93060594"/>
<dbReference type="KEGG" id="bpd:BURPS668_2322"/>
<dbReference type="HOGENOM" id="CLU_014218_8_2_4"/>
<dbReference type="GO" id="GO:0009376">
    <property type="term" value="C:HslUV protease complex"/>
    <property type="evidence" value="ECO:0007669"/>
    <property type="project" value="TreeGrafter"/>
</dbReference>
<dbReference type="GO" id="GO:0005524">
    <property type="term" value="F:ATP binding"/>
    <property type="evidence" value="ECO:0007669"/>
    <property type="project" value="UniProtKB-UniRule"/>
</dbReference>
<dbReference type="GO" id="GO:0016887">
    <property type="term" value="F:ATP hydrolysis activity"/>
    <property type="evidence" value="ECO:0007669"/>
    <property type="project" value="InterPro"/>
</dbReference>
<dbReference type="GO" id="GO:0140662">
    <property type="term" value="F:ATP-dependent protein folding chaperone"/>
    <property type="evidence" value="ECO:0007669"/>
    <property type="project" value="InterPro"/>
</dbReference>
<dbReference type="GO" id="GO:0046983">
    <property type="term" value="F:protein dimerization activity"/>
    <property type="evidence" value="ECO:0007669"/>
    <property type="project" value="InterPro"/>
</dbReference>
<dbReference type="GO" id="GO:0051082">
    <property type="term" value="F:unfolded protein binding"/>
    <property type="evidence" value="ECO:0007669"/>
    <property type="project" value="UniProtKB-UniRule"/>
</dbReference>
<dbReference type="GO" id="GO:0008270">
    <property type="term" value="F:zinc ion binding"/>
    <property type="evidence" value="ECO:0007669"/>
    <property type="project" value="InterPro"/>
</dbReference>
<dbReference type="GO" id="GO:0051301">
    <property type="term" value="P:cell division"/>
    <property type="evidence" value="ECO:0007669"/>
    <property type="project" value="TreeGrafter"/>
</dbReference>
<dbReference type="GO" id="GO:0051603">
    <property type="term" value="P:proteolysis involved in protein catabolic process"/>
    <property type="evidence" value="ECO:0007669"/>
    <property type="project" value="TreeGrafter"/>
</dbReference>
<dbReference type="CDD" id="cd19497">
    <property type="entry name" value="RecA-like_ClpX"/>
    <property type="match status" value="1"/>
</dbReference>
<dbReference type="FunFam" id="1.10.8.60:FF:000002">
    <property type="entry name" value="ATP-dependent Clp protease ATP-binding subunit ClpX"/>
    <property type="match status" value="1"/>
</dbReference>
<dbReference type="FunFam" id="3.40.50.300:FF:000005">
    <property type="entry name" value="ATP-dependent Clp protease ATP-binding subunit ClpX"/>
    <property type="match status" value="1"/>
</dbReference>
<dbReference type="Gene3D" id="1.10.8.60">
    <property type="match status" value="1"/>
</dbReference>
<dbReference type="Gene3D" id="6.20.220.10">
    <property type="entry name" value="ClpX chaperone, C4-type zinc finger domain"/>
    <property type="match status" value="1"/>
</dbReference>
<dbReference type="Gene3D" id="3.40.50.300">
    <property type="entry name" value="P-loop containing nucleotide triphosphate hydrolases"/>
    <property type="match status" value="1"/>
</dbReference>
<dbReference type="HAMAP" id="MF_00175">
    <property type="entry name" value="ClpX"/>
    <property type="match status" value="1"/>
</dbReference>
<dbReference type="InterPro" id="IPR003593">
    <property type="entry name" value="AAA+_ATPase"/>
</dbReference>
<dbReference type="InterPro" id="IPR050052">
    <property type="entry name" value="ATP-dep_Clp_protease_ClpX"/>
</dbReference>
<dbReference type="InterPro" id="IPR003959">
    <property type="entry name" value="ATPase_AAA_core"/>
</dbReference>
<dbReference type="InterPro" id="IPR019489">
    <property type="entry name" value="Clp_ATPase_C"/>
</dbReference>
<dbReference type="InterPro" id="IPR004487">
    <property type="entry name" value="Clp_protease_ATP-bd_su_ClpX"/>
</dbReference>
<dbReference type="InterPro" id="IPR046425">
    <property type="entry name" value="ClpX_bact"/>
</dbReference>
<dbReference type="InterPro" id="IPR027417">
    <property type="entry name" value="P-loop_NTPase"/>
</dbReference>
<dbReference type="InterPro" id="IPR010603">
    <property type="entry name" value="Znf_CppX_C4"/>
</dbReference>
<dbReference type="InterPro" id="IPR038366">
    <property type="entry name" value="Znf_CppX_C4_sf"/>
</dbReference>
<dbReference type="NCBIfam" id="TIGR00382">
    <property type="entry name" value="clpX"/>
    <property type="match status" value="1"/>
</dbReference>
<dbReference type="NCBIfam" id="NF003745">
    <property type="entry name" value="PRK05342.1"/>
    <property type="match status" value="1"/>
</dbReference>
<dbReference type="PANTHER" id="PTHR48102:SF7">
    <property type="entry name" value="ATP-DEPENDENT CLP PROTEASE ATP-BINDING SUBUNIT CLPX-LIKE, MITOCHONDRIAL"/>
    <property type="match status" value="1"/>
</dbReference>
<dbReference type="PANTHER" id="PTHR48102">
    <property type="entry name" value="ATP-DEPENDENT CLP PROTEASE ATP-BINDING SUBUNIT CLPX-LIKE, MITOCHONDRIAL-RELATED"/>
    <property type="match status" value="1"/>
</dbReference>
<dbReference type="Pfam" id="PF07724">
    <property type="entry name" value="AAA_2"/>
    <property type="match status" value="1"/>
</dbReference>
<dbReference type="Pfam" id="PF10431">
    <property type="entry name" value="ClpB_D2-small"/>
    <property type="match status" value="1"/>
</dbReference>
<dbReference type="Pfam" id="PF06689">
    <property type="entry name" value="zf-C4_ClpX"/>
    <property type="match status" value="1"/>
</dbReference>
<dbReference type="SMART" id="SM00382">
    <property type="entry name" value="AAA"/>
    <property type="match status" value="1"/>
</dbReference>
<dbReference type="SMART" id="SM01086">
    <property type="entry name" value="ClpB_D2-small"/>
    <property type="match status" value="1"/>
</dbReference>
<dbReference type="SMART" id="SM00994">
    <property type="entry name" value="zf-C4_ClpX"/>
    <property type="match status" value="1"/>
</dbReference>
<dbReference type="SUPFAM" id="SSF57716">
    <property type="entry name" value="Glucocorticoid receptor-like (DNA-binding domain)"/>
    <property type="match status" value="1"/>
</dbReference>
<dbReference type="SUPFAM" id="SSF52540">
    <property type="entry name" value="P-loop containing nucleoside triphosphate hydrolases"/>
    <property type="match status" value="1"/>
</dbReference>
<dbReference type="PROSITE" id="PS51902">
    <property type="entry name" value="CLPX_ZB"/>
    <property type="match status" value="1"/>
</dbReference>
<evidence type="ECO:0000255" key="1">
    <source>
        <dbReference type="HAMAP-Rule" id="MF_00175"/>
    </source>
</evidence>
<evidence type="ECO:0000255" key="2">
    <source>
        <dbReference type="PROSITE-ProRule" id="PRU01250"/>
    </source>
</evidence>
<keyword id="KW-0067">ATP-binding</keyword>
<keyword id="KW-0143">Chaperone</keyword>
<keyword id="KW-0479">Metal-binding</keyword>
<keyword id="KW-0547">Nucleotide-binding</keyword>
<keyword id="KW-0862">Zinc</keyword>
<accession>A3NAI4</accession>
<reference key="1">
    <citation type="journal article" date="2010" name="Genome Biol. Evol.">
        <title>Continuing evolution of Burkholderia mallei through genome reduction and large-scale rearrangements.</title>
        <authorList>
            <person name="Losada L."/>
            <person name="Ronning C.M."/>
            <person name="DeShazer D."/>
            <person name="Woods D."/>
            <person name="Fedorova N."/>
            <person name="Kim H.S."/>
            <person name="Shabalina S.A."/>
            <person name="Pearson T.R."/>
            <person name="Brinkac L."/>
            <person name="Tan P."/>
            <person name="Nandi T."/>
            <person name="Crabtree J."/>
            <person name="Badger J."/>
            <person name="Beckstrom-Sternberg S."/>
            <person name="Saqib M."/>
            <person name="Schutzer S.E."/>
            <person name="Keim P."/>
            <person name="Nierman W.C."/>
        </authorList>
    </citation>
    <scope>NUCLEOTIDE SEQUENCE [LARGE SCALE GENOMIC DNA]</scope>
    <source>
        <strain>668</strain>
    </source>
</reference>
<feature type="chain" id="PRO_1000024532" description="ATP-dependent Clp protease ATP-binding subunit ClpX">
    <location>
        <begin position="1"/>
        <end position="423"/>
    </location>
</feature>
<feature type="domain" description="ClpX-type ZB" evidence="2">
    <location>
        <begin position="3"/>
        <end position="56"/>
    </location>
</feature>
<feature type="binding site" evidence="2">
    <location>
        <position position="15"/>
    </location>
    <ligand>
        <name>Zn(2+)</name>
        <dbReference type="ChEBI" id="CHEBI:29105"/>
    </ligand>
</feature>
<feature type="binding site" evidence="2">
    <location>
        <position position="18"/>
    </location>
    <ligand>
        <name>Zn(2+)</name>
        <dbReference type="ChEBI" id="CHEBI:29105"/>
    </ligand>
</feature>
<feature type="binding site" evidence="2">
    <location>
        <position position="37"/>
    </location>
    <ligand>
        <name>Zn(2+)</name>
        <dbReference type="ChEBI" id="CHEBI:29105"/>
    </ligand>
</feature>
<feature type="binding site" evidence="2">
    <location>
        <position position="40"/>
    </location>
    <ligand>
        <name>Zn(2+)</name>
        <dbReference type="ChEBI" id="CHEBI:29105"/>
    </ligand>
</feature>
<feature type="binding site" evidence="1">
    <location>
        <begin position="122"/>
        <end position="129"/>
    </location>
    <ligand>
        <name>ATP</name>
        <dbReference type="ChEBI" id="CHEBI:30616"/>
    </ligand>
</feature>
<proteinExistence type="inferred from homology"/>